<proteinExistence type="evidence at protein level"/>
<evidence type="ECO:0000250" key="1">
    <source>
        <dbReference type="UniProtKB" id="P83510"/>
    </source>
</evidence>
<evidence type="ECO:0000255" key="2">
    <source>
        <dbReference type="PROSITE-ProRule" id="PRU00159"/>
    </source>
</evidence>
<evidence type="ECO:0000255" key="3">
    <source>
        <dbReference type="PROSITE-ProRule" id="PRU00795"/>
    </source>
</evidence>
<evidence type="ECO:0000255" key="4">
    <source>
        <dbReference type="PROSITE-ProRule" id="PRU10027"/>
    </source>
</evidence>
<evidence type="ECO:0000256" key="5">
    <source>
        <dbReference type="SAM" id="MobiDB-lite"/>
    </source>
</evidence>
<evidence type="ECO:0000269" key="6">
    <source>
    </source>
</evidence>
<evidence type="ECO:0000269" key="7">
    <source>
    </source>
</evidence>
<evidence type="ECO:0000269" key="8">
    <source>
    </source>
</evidence>
<evidence type="ECO:0000269" key="9">
    <source>
    </source>
</evidence>
<evidence type="ECO:0000269" key="10">
    <source>
    </source>
</evidence>
<evidence type="ECO:0000269" key="11">
    <source>
    </source>
</evidence>
<evidence type="ECO:0000269" key="12">
    <source>
    </source>
</evidence>
<evidence type="ECO:0000269" key="13">
    <source>
    </source>
</evidence>
<evidence type="ECO:0000269" key="14">
    <source>
    </source>
</evidence>
<evidence type="ECO:0000269" key="15">
    <source>
    </source>
</evidence>
<evidence type="ECO:0000303" key="16">
    <source>
    </source>
</evidence>
<evidence type="ECO:0000303" key="17">
    <source>
    </source>
</evidence>
<evidence type="ECO:0000305" key="18"/>
<evidence type="ECO:0000312" key="19">
    <source>
        <dbReference type="EMBL" id="AAF03782.1"/>
    </source>
</evidence>
<evidence type="ECO:0000312" key="20">
    <source>
        <dbReference type="HGNC" id="HGNC:30765"/>
    </source>
</evidence>
<evidence type="ECO:0007744" key="21">
    <source>
    </source>
</evidence>
<evidence type="ECO:0007744" key="22">
    <source>
    </source>
</evidence>
<evidence type="ECO:0007744" key="23">
    <source>
    </source>
</evidence>
<evidence type="ECO:0007744" key="24">
    <source>
    </source>
</evidence>
<evidence type="ECO:0007744" key="25">
    <source>
    </source>
</evidence>
<evidence type="ECO:0007744" key="26">
    <source>
    </source>
</evidence>
<evidence type="ECO:0007744" key="27">
    <source>
    </source>
</evidence>
<evidence type="ECO:0007744" key="28">
    <source>
    </source>
</evidence>
<evidence type="ECO:0007829" key="29">
    <source>
        <dbReference type="PDB" id="2X7F"/>
    </source>
</evidence>
<evidence type="ECO:0007829" key="30">
    <source>
        <dbReference type="PDB" id="5AX9"/>
    </source>
</evidence>
<evidence type="ECO:0007829" key="31">
    <source>
        <dbReference type="PDB" id="6RA5"/>
    </source>
</evidence>
<evidence type="ECO:0007829" key="32">
    <source>
        <dbReference type="PDB" id="6RA7"/>
    </source>
</evidence>
<evidence type="ECO:0007829" key="33">
    <source>
        <dbReference type="PDB" id="7XZQ"/>
    </source>
</evidence>
<feature type="chain" id="PRO_0000086761" description="TRAF2 and NCK-interacting protein kinase">
    <location>
        <begin position="1"/>
        <end position="1360"/>
    </location>
</feature>
<feature type="domain" description="Protein kinase" evidence="2">
    <location>
        <begin position="25"/>
        <end position="289"/>
    </location>
</feature>
<feature type="domain" description="CNH" evidence="3">
    <location>
        <begin position="1047"/>
        <end position="1334"/>
    </location>
</feature>
<feature type="region of interest" description="Disordered" evidence="5">
    <location>
        <begin position="284"/>
        <end position="347"/>
    </location>
</feature>
<feature type="region of interest" description="Mediates interaction with NEDD4" evidence="12">
    <location>
        <begin position="290"/>
        <end position="1047"/>
    </location>
</feature>
<feature type="region of interest" description="Disordered" evidence="5">
    <location>
        <begin position="398"/>
        <end position="440"/>
    </location>
</feature>
<feature type="region of interest" description="Disordered" evidence="5">
    <location>
        <begin position="539"/>
        <end position="589"/>
    </location>
</feature>
<feature type="region of interest" description="Disordered" evidence="5">
    <location>
        <begin position="601"/>
        <end position="801"/>
    </location>
</feature>
<feature type="region of interest" description="Disordered" evidence="5">
    <location>
        <begin position="814"/>
        <end position="878"/>
    </location>
</feature>
<feature type="region of interest" description="Disordered" evidence="5">
    <location>
        <begin position="908"/>
        <end position="927"/>
    </location>
</feature>
<feature type="region of interest" description="Disordered" evidence="5">
    <location>
        <begin position="933"/>
        <end position="998"/>
    </location>
</feature>
<feature type="compositionally biased region" description="Basic and acidic residues" evidence="5">
    <location>
        <begin position="288"/>
        <end position="307"/>
    </location>
</feature>
<feature type="compositionally biased region" description="Acidic residues" evidence="5">
    <location>
        <begin position="317"/>
        <end position="335"/>
    </location>
</feature>
<feature type="compositionally biased region" description="Basic and acidic residues" evidence="5">
    <location>
        <begin position="652"/>
        <end position="669"/>
    </location>
</feature>
<feature type="compositionally biased region" description="Low complexity" evidence="5">
    <location>
        <begin position="720"/>
        <end position="755"/>
    </location>
</feature>
<feature type="compositionally biased region" description="Basic and acidic residues" evidence="5">
    <location>
        <begin position="775"/>
        <end position="789"/>
    </location>
</feature>
<feature type="compositionally biased region" description="Basic and acidic residues" evidence="5">
    <location>
        <begin position="814"/>
        <end position="827"/>
    </location>
</feature>
<feature type="compositionally biased region" description="Acidic residues" evidence="5">
    <location>
        <begin position="834"/>
        <end position="847"/>
    </location>
</feature>
<feature type="compositionally biased region" description="Basic and acidic residues" evidence="5">
    <location>
        <begin position="908"/>
        <end position="917"/>
    </location>
</feature>
<feature type="compositionally biased region" description="Acidic residues" evidence="5">
    <location>
        <begin position="987"/>
        <end position="996"/>
    </location>
</feature>
<feature type="active site" description="Proton acceptor" evidence="2 4">
    <location>
        <position position="153"/>
    </location>
</feature>
<feature type="binding site" evidence="2">
    <location>
        <begin position="31"/>
        <end position="39"/>
    </location>
    <ligand>
        <name>ATP</name>
        <dbReference type="ChEBI" id="CHEBI:30616"/>
    </ligand>
</feature>
<feature type="binding site" evidence="2">
    <location>
        <position position="54"/>
    </location>
    <ligand>
        <name>ATP</name>
        <dbReference type="ChEBI" id="CHEBI:30616"/>
    </ligand>
</feature>
<feature type="modified residue" description="Phosphothreonine" evidence="1">
    <location>
        <position position="187"/>
    </location>
</feature>
<feature type="modified residue" description="Phosphoserine" evidence="1">
    <location>
        <position position="324"/>
    </location>
</feature>
<feature type="modified residue" description="Phosphoserine" evidence="26">
    <location>
        <position position="326"/>
    </location>
</feature>
<feature type="modified residue" description="Phosphoserine" evidence="25">
    <location>
        <position position="560"/>
    </location>
</feature>
<feature type="modified residue" description="Phosphoserine" evidence="27">
    <location>
        <position position="570"/>
    </location>
</feature>
<feature type="modified residue" description="Phosphothreonine" evidence="1">
    <location>
        <position position="581"/>
    </location>
</feature>
<feature type="modified residue" description="Phosphoserine" evidence="27">
    <location>
        <position position="600"/>
    </location>
</feature>
<feature type="modified residue" description="Phosphoserine" evidence="27">
    <location>
        <position position="608"/>
    </location>
</feature>
<feature type="modified residue" description="Phosphoserine" evidence="27">
    <location>
        <position position="610"/>
    </location>
</feature>
<feature type="modified residue" description="Phosphoserine" evidence="22 24 25 27 28">
    <location>
        <position position="640"/>
    </location>
</feature>
<feature type="modified residue" description="Phosphoserine" evidence="23 27">
    <location>
        <position position="678"/>
    </location>
</feature>
<feature type="modified residue" description="Phosphoserine" evidence="23 27 28">
    <location>
        <position position="680"/>
    </location>
</feature>
<feature type="modified residue" description="Phosphoserine" evidence="24 25 26 27">
    <location>
        <position position="688"/>
    </location>
</feature>
<feature type="modified residue" description="Phosphoserine" evidence="27">
    <location>
        <position position="701"/>
    </location>
</feature>
<feature type="modified residue" description="Phosphoserine" evidence="25 27">
    <location>
        <position position="707"/>
    </location>
</feature>
<feature type="modified residue" description="Phosphoserine" evidence="24 25 27">
    <location>
        <position position="720"/>
    </location>
</feature>
<feature type="modified residue" description="Phosphoserine" evidence="27">
    <location>
        <position position="764"/>
    </location>
</feature>
<feature type="modified residue" description="Phosphoserine" evidence="25">
    <location>
        <position position="766"/>
    </location>
</feature>
<feature type="modified residue" description="Phosphoserine" evidence="21 22 24 25 26 27">
    <location>
        <position position="769"/>
    </location>
</feature>
<feature type="modified residue" description="Phosphoserine" evidence="27">
    <location>
        <position position="959"/>
    </location>
</feature>
<feature type="splice variant" id="VSP_004889" description="In isoform 2, isoform 5, isoform 6 and isoform 8." evidence="16 17">
    <location>
        <begin position="445"/>
        <end position="473"/>
    </location>
</feature>
<feature type="splice variant" id="VSP_004890" description="In isoform 3, isoform 5, isoform 7 and isoform 8." evidence="16 17">
    <location>
        <begin position="537"/>
        <end position="591"/>
    </location>
</feature>
<feature type="splice variant" id="VSP_004891" description="In isoform 4, isoform 6, isoform 7 and isoform 8." evidence="16">
    <location>
        <begin position="795"/>
        <end position="802"/>
    </location>
</feature>
<feature type="sequence variant" id="VAR_041231" description="In dbSNP:rs55778284." evidence="8">
    <original>K</original>
    <variation>E</variation>
    <location>
        <position position="778"/>
    </location>
</feature>
<feature type="sequence variant" id="VAR_041232" description="In dbSNP:rs35090763." evidence="8">
    <original>G</original>
    <variation>E</variation>
    <location>
        <position position="910"/>
    </location>
</feature>
<feature type="sequence variant" id="VAR_041233" description="In dbSNP:rs17857452." evidence="8">
    <original>A</original>
    <variation>T</variation>
    <location>
        <position position="999"/>
    </location>
</feature>
<feature type="mutagenesis site" description="Kinase dead. Loss of autophosphorylation and loss of function in cytoskeleton regulation." evidence="7 11">
    <original>K</original>
    <variation>A</variation>
    <location>
        <position position="54"/>
    </location>
</feature>
<feature type="mutagenesis site" description="Loss of autophosphorylation." evidence="11">
    <original>RD</original>
    <variation>AA</variation>
    <location>
        <begin position="152"/>
        <end position="153"/>
    </location>
</feature>
<feature type="mutagenesis site" description="Loss of autophosphorylation." evidence="11">
    <original>DF</original>
    <variation>AA</variation>
    <location>
        <begin position="171"/>
        <end position="172"/>
    </location>
</feature>
<feature type="helix" evidence="32">
    <location>
        <begin position="15"/>
        <end position="17"/>
    </location>
</feature>
<feature type="turn" evidence="32">
    <location>
        <begin position="22"/>
        <end position="24"/>
    </location>
</feature>
<feature type="strand" evidence="32">
    <location>
        <begin position="25"/>
        <end position="31"/>
    </location>
</feature>
<feature type="helix" evidence="32">
    <location>
        <begin position="32"/>
        <end position="34"/>
    </location>
</feature>
<feature type="strand" evidence="32">
    <location>
        <begin position="37"/>
        <end position="44"/>
    </location>
</feature>
<feature type="turn" evidence="32">
    <location>
        <begin position="45"/>
        <end position="47"/>
    </location>
</feature>
<feature type="strand" evidence="32">
    <location>
        <begin position="50"/>
        <end position="58"/>
    </location>
</feature>
<feature type="helix" evidence="33">
    <location>
        <begin position="60"/>
        <end position="62"/>
    </location>
</feature>
<feature type="helix" evidence="32">
    <location>
        <begin position="63"/>
        <end position="76"/>
    </location>
</feature>
<feature type="strand" evidence="32">
    <location>
        <begin position="85"/>
        <end position="91"/>
    </location>
</feature>
<feature type="strand" evidence="30">
    <location>
        <begin position="95"/>
        <end position="97"/>
    </location>
</feature>
<feature type="strand" evidence="32">
    <location>
        <begin position="99"/>
        <end position="106"/>
    </location>
</feature>
<feature type="helix" evidence="32">
    <location>
        <begin position="113"/>
        <end position="118"/>
    </location>
</feature>
<feature type="helix" evidence="32">
    <location>
        <begin position="121"/>
        <end position="123"/>
    </location>
</feature>
<feature type="helix" evidence="32">
    <location>
        <begin position="127"/>
        <end position="146"/>
    </location>
</feature>
<feature type="helix" evidence="32">
    <location>
        <begin position="156"/>
        <end position="158"/>
    </location>
</feature>
<feature type="strand" evidence="32">
    <location>
        <begin position="159"/>
        <end position="161"/>
    </location>
</feature>
<feature type="strand" evidence="32">
    <location>
        <begin position="167"/>
        <end position="169"/>
    </location>
</feature>
<feature type="turn" evidence="29">
    <location>
        <begin position="173"/>
        <end position="175"/>
    </location>
</feature>
<feature type="strand" evidence="33">
    <location>
        <begin position="179"/>
        <end position="182"/>
    </location>
</feature>
<feature type="helix" evidence="32">
    <location>
        <begin position="192"/>
        <end position="194"/>
    </location>
</feature>
<feature type="helix" evidence="32">
    <location>
        <begin position="197"/>
        <end position="200"/>
    </location>
</feature>
<feature type="turn" evidence="32">
    <location>
        <begin position="201"/>
        <end position="204"/>
    </location>
</feature>
<feature type="helix" evidence="32">
    <location>
        <begin position="213"/>
        <end position="228"/>
    </location>
</feature>
<feature type="turn" evidence="32">
    <location>
        <begin position="232"/>
        <end position="235"/>
    </location>
</feature>
<feature type="helix" evidence="32">
    <location>
        <begin position="238"/>
        <end position="244"/>
    </location>
</feature>
<feature type="turn" evidence="32">
    <location>
        <begin position="245"/>
        <end position="247"/>
    </location>
</feature>
<feature type="strand" evidence="31">
    <location>
        <begin position="256"/>
        <end position="258"/>
    </location>
</feature>
<feature type="helix" evidence="32">
    <location>
        <begin position="260"/>
        <end position="269"/>
    </location>
</feature>
<feature type="helix" evidence="32">
    <location>
        <begin position="274"/>
        <end position="276"/>
    </location>
</feature>
<feature type="helix" evidence="32">
    <location>
        <begin position="280"/>
        <end position="284"/>
    </location>
</feature>
<feature type="helix" evidence="32">
    <location>
        <begin position="287"/>
        <end position="290"/>
    </location>
</feature>
<feature type="helix" evidence="32">
    <location>
        <begin position="295"/>
        <end position="313"/>
    </location>
</feature>
<comment type="function">
    <text evidence="6 7 10 11 12 13 14">Serine/threonine kinase that acts as an essential activator of the Wnt signaling pathway. Recruited to promoters of Wnt target genes and required to activate their expression. May act by phosphorylating TCF4/TCF7L2. Appears to act upstream of the JUN N-terminal pathway. May play a role in the response to environmental stress. Part of a signaling complex composed of NEDD4, RAP2A and TNIK which regulates neuronal dendrite extension and arborization during development. More generally, it may play a role in cytoskeletal rearrangements and regulate cell spreading. Phosphorylates SMAD1 on Thr-322. Activator of the Hippo signaling pathway which plays a pivotal role in organ size control and tumor suppression by restricting proliferation and promoting apoptosis. MAP4Ks act in parallel to and are partially redundant with STK3/MST2 and STK4/MST2 in the phosphorylation and activation of LATS1/2, and establish MAP4Ks as components of the expanded Hippo pathway (PubMed:26437443).</text>
</comment>
<comment type="catalytic activity">
    <reaction evidence="6">
        <text>L-seryl-[protein] + ATP = O-phospho-L-seryl-[protein] + ADP + H(+)</text>
        <dbReference type="Rhea" id="RHEA:17989"/>
        <dbReference type="Rhea" id="RHEA-COMP:9863"/>
        <dbReference type="Rhea" id="RHEA-COMP:11604"/>
        <dbReference type="ChEBI" id="CHEBI:15378"/>
        <dbReference type="ChEBI" id="CHEBI:29999"/>
        <dbReference type="ChEBI" id="CHEBI:30616"/>
        <dbReference type="ChEBI" id="CHEBI:83421"/>
        <dbReference type="ChEBI" id="CHEBI:456216"/>
        <dbReference type="EC" id="2.7.11.1"/>
    </reaction>
</comment>
<comment type="catalytic activity">
    <reaction evidence="6">
        <text>L-threonyl-[protein] + ATP = O-phospho-L-threonyl-[protein] + ADP + H(+)</text>
        <dbReference type="Rhea" id="RHEA:46608"/>
        <dbReference type="Rhea" id="RHEA-COMP:11060"/>
        <dbReference type="Rhea" id="RHEA-COMP:11605"/>
        <dbReference type="ChEBI" id="CHEBI:15378"/>
        <dbReference type="ChEBI" id="CHEBI:30013"/>
        <dbReference type="ChEBI" id="CHEBI:30616"/>
        <dbReference type="ChEBI" id="CHEBI:61977"/>
        <dbReference type="ChEBI" id="CHEBI:456216"/>
        <dbReference type="EC" id="2.7.11.1"/>
    </reaction>
</comment>
<comment type="subunit">
    <text evidence="6 7 9 11 12">Interacts (via the CNH domain) with RAP2A (GTP-bound form preferentially); the interaction is direct and required for the activation of TNIK by RAP2A. Interacts with NEDD4; recruits RAP2A to NEDD4. Interacts with TRAF2 and NCK. Interacts with TCF7L2/TCF4 and CTNNB1; the interaction is direct. Interacts with TANC1.</text>
</comment>
<comment type="interaction">
    <interactant intactId="EBI-1051794">
        <id>Q9UKE5</id>
    </interactant>
    <interactant intactId="EBI-491549">
        <id>P35222</id>
        <label>CTNNB1</label>
    </interactant>
    <organismsDiffer>false</organismsDiffer>
    <experiments>3</experiments>
</comment>
<comment type="interaction">
    <interactant intactId="EBI-1051794">
        <id>Q9UKE5</id>
    </interactant>
    <interactant intactId="EBI-529989">
        <id>Q9NRI5</id>
        <label>DISC1</label>
    </interactant>
    <organismsDiffer>false</organismsDiffer>
    <experiments>4</experiments>
</comment>
<comment type="interaction">
    <interactant intactId="EBI-1051794">
        <id>Q9UKE5</id>
    </interactant>
    <interactant intactId="EBI-81266">
        <id>O14920</id>
        <label>IKBKB</label>
    </interactant>
    <organismsDiffer>false</organismsDiffer>
    <experiments>2</experiments>
</comment>
<comment type="interaction">
    <interactant intactId="EBI-1051794">
        <id>Q9UKE5</id>
    </interactant>
    <interactant intactId="EBI-358684">
        <id>O43318</id>
        <label>MAP3K7</label>
    </interactant>
    <organismsDiffer>false</organismsDiffer>
    <experiments>3</experiments>
</comment>
<comment type="interaction">
    <interactant intactId="EBI-1051794">
        <id>Q9UKE5</id>
    </interactant>
    <interactant intactId="EBI-389883">
        <id>P16333</id>
        <label>NCK1</label>
    </interactant>
    <organismsDiffer>false</organismsDiffer>
    <experiments>2</experiments>
</comment>
<comment type="interaction">
    <interactant intactId="EBI-1051794">
        <id>Q9UKE5</id>
    </interactant>
    <interactant intactId="EBI-358708">
        <id>Q9NYJ8</id>
        <label>TAB2</label>
    </interactant>
    <organismsDiffer>false</organismsDiffer>
    <experiments>3</experiments>
</comment>
<comment type="interaction">
    <interactant intactId="EBI-1051794">
        <id>Q9UKE5</id>
    </interactant>
    <interactant intactId="EBI-924724">
        <id>Q9NQB0</id>
        <label>TCF7L2</label>
    </interactant>
    <organismsDiffer>false</organismsDiffer>
    <experiments>3</experiments>
</comment>
<comment type="interaction">
    <interactant intactId="EBI-1051794">
        <id>Q9UKE5</id>
    </interactant>
    <interactant intactId="EBI-355744">
        <id>Q12933</id>
        <label>TRAF2</label>
    </interactant>
    <organismsDiffer>false</organismsDiffer>
    <experiments>2</experiments>
</comment>
<comment type="interaction">
    <interactant intactId="EBI-1051794">
        <id>Q9UKE5</id>
    </interactant>
    <interactant intactId="EBI-359276">
        <id>Q9Y4K3</id>
        <label>TRAF6</label>
    </interactant>
    <organismsDiffer>false</organismsDiffer>
    <experiments>3</experiments>
</comment>
<comment type="interaction">
    <interactant intactId="EBI-1051794">
        <id>Q9UKE5</id>
    </interactant>
    <interactant intactId="EBI-6973030">
        <id>P03230</id>
        <label>LMP1</label>
    </interactant>
    <organismsDiffer>true</organismsDiffer>
    <experiments>7</experiments>
</comment>
<comment type="interaction">
    <interactant intactId="EBI-1051794">
        <id>Q9UKE5</id>
    </interactant>
    <interactant intactId="EBI-2133582">
        <id>Q6F6B3</id>
        <label>Tanc1</label>
    </interactant>
    <organismsDiffer>true</organismsDiffer>
    <experiments>2</experiments>
</comment>
<comment type="subcellular location">
    <subcellularLocation>
        <location>Nucleus</location>
    </subcellularLocation>
    <subcellularLocation>
        <location>Cytoplasm</location>
    </subcellularLocation>
    <subcellularLocation>
        <location>Recycling endosome</location>
    </subcellularLocation>
    <subcellularLocation>
        <location>Cytoplasm</location>
        <location>Cytoskeleton</location>
    </subcellularLocation>
    <text>Associated with recycling endosomes and the cytoskeletal fraction upon RAP2A overexpression.</text>
</comment>
<comment type="alternative products">
    <event type="alternative splicing"/>
    <isoform>
        <id>Q9UKE5-1</id>
        <name>1</name>
        <sequence type="displayed"/>
    </isoform>
    <isoform>
        <id>Q9UKE5-2</id>
        <name>2</name>
        <sequence type="described" ref="VSP_004889"/>
    </isoform>
    <isoform>
        <id>Q9UKE5-3</id>
        <name>3</name>
        <sequence type="described" ref="VSP_004890"/>
    </isoform>
    <isoform>
        <id>Q9UKE5-4</id>
        <name>4</name>
        <sequence type="described" ref="VSP_004891"/>
    </isoform>
    <isoform>
        <id>Q9UKE5-5</id>
        <name>5</name>
        <sequence type="described" ref="VSP_004889 VSP_004890"/>
    </isoform>
    <isoform>
        <id>Q9UKE5-6</id>
        <name>6</name>
        <sequence type="described" ref="VSP_004889 VSP_004891"/>
    </isoform>
    <isoform>
        <id>Q9UKE5-7</id>
        <name>7</name>
        <sequence type="described" ref="VSP_004890 VSP_004891"/>
    </isoform>
    <isoform>
        <id>Q9UKE5-8</id>
        <name>8</name>
        <sequence type="described" ref="VSP_004889 VSP_004890 VSP_004891"/>
    </isoform>
</comment>
<comment type="tissue specificity">
    <text evidence="6 11">Expressed ubiquitously. Highest levels observed in heart, brain and skeletal muscle. Expressed in normal colonic epithelia and colorectal cancer tissues.</text>
</comment>
<comment type="PTM">
    <text>Autophosphorylated. Autophosphorylation is activated by RAP2A and induces association to the cytoskeletal fraction.</text>
</comment>
<comment type="disease" evidence="15">
    <disease id="DI-04760">
        <name>Intellectual developmental disorder, autosomal recessive 54</name>
        <acronym>MRT54</acronym>
        <description>A disorder characterized by significantly below average general intellectual functioning associated with impairments in adaptive behavior and manifested during the developmental period. MRT54 patients manifest intellectual disability, delayed speech and hyperactivity.</description>
        <dbReference type="MIM" id="617028"/>
    </disease>
    <text>The disease may be caused by variants affecting the gene represented in this entry.</text>
</comment>
<comment type="similarity">
    <text evidence="18">Belongs to the protein kinase superfamily. STE Ser/Thr protein kinase family. STE20 subfamily.</text>
</comment>
<comment type="sequence caution" evidence="18">
    <conflict type="erroneous initiation">
        <sequence resource="EMBL-CDS" id="BAA25477"/>
    </conflict>
    <text>Truncated N-terminus.</text>
</comment>
<keyword id="KW-0002">3D-structure</keyword>
<keyword id="KW-0025">Alternative splicing</keyword>
<keyword id="KW-0067">ATP-binding</keyword>
<keyword id="KW-0963">Cytoplasm</keyword>
<keyword id="KW-0206">Cytoskeleton</keyword>
<keyword id="KW-0967">Endosome</keyword>
<keyword id="KW-0991">Intellectual disability</keyword>
<keyword id="KW-0418">Kinase</keyword>
<keyword id="KW-0524">Neurogenesis</keyword>
<keyword id="KW-0547">Nucleotide-binding</keyword>
<keyword id="KW-0539">Nucleus</keyword>
<keyword id="KW-0597">Phosphoprotein</keyword>
<keyword id="KW-1267">Proteomics identification</keyword>
<keyword id="KW-1185">Reference proteome</keyword>
<keyword id="KW-0723">Serine/threonine-protein kinase</keyword>
<keyword id="KW-0808">Transferase</keyword>
<keyword id="KW-0879">Wnt signaling pathway</keyword>
<protein>
    <recommendedName>
        <fullName>TRAF2 and NCK-interacting protein kinase</fullName>
        <ecNumber evidence="6">2.7.11.1</ecNumber>
    </recommendedName>
</protein>
<name>TNIK_HUMAN</name>
<accession>Q9UKE5</accession>
<accession>A7E2A3</accession>
<accession>A8K4U1</accession>
<accession>D3DNQ6</accession>
<accession>O60298</accession>
<accession>Q8WUY7</accession>
<accession>Q9UKD8</accession>
<accession>Q9UKD9</accession>
<accession>Q9UKE0</accession>
<accession>Q9UKE1</accession>
<accession>Q9UKE2</accession>
<accession>Q9UKE3</accession>
<accession>Q9UKE4</accession>
<gene>
    <name evidence="20" type="primary">TNIK</name>
    <name type="synonym">KIAA0551</name>
</gene>
<dbReference type="EC" id="2.7.11.1" evidence="6"/>
<dbReference type="EMBL" id="AF172264">
    <property type="protein sequence ID" value="AAF03782.1"/>
    <property type="molecule type" value="mRNA"/>
</dbReference>
<dbReference type="EMBL" id="AF172268">
    <property type="protein sequence ID" value="AAF03786.1"/>
    <property type="molecule type" value="mRNA"/>
</dbReference>
<dbReference type="EMBL" id="AF172267">
    <property type="protein sequence ID" value="AAF03785.1"/>
    <property type="molecule type" value="mRNA"/>
</dbReference>
<dbReference type="EMBL" id="AF172266">
    <property type="protein sequence ID" value="AAF03784.1"/>
    <property type="molecule type" value="mRNA"/>
</dbReference>
<dbReference type="EMBL" id="AF172265">
    <property type="protein sequence ID" value="AAF03783.1"/>
    <property type="molecule type" value="mRNA"/>
</dbReference>
<dbReference type="EMBL" id="AF172270">
    <property type="protein sequence ID" value="AAF03788.1"/>
    <property type="molecule type" value="mRNA"/>
</dbReference>
<dbReference type="EMBL" id="AF172271">
    <property type="protein sequence ID" value="AAF03789.1"/>
    <property type="molecule type" value="mRNA"/>
</dbReference>
<dbReference type="EMBL" id="AF172269">
    <property type="protein sequence ID" value="AAF03787.1"/>
    <property type="molecule type" value="mRNA"/>
</dbReference>
<dbReference type="EMBL" id="AB011123">
    <property type="protein sequence ID" value="BAA25477.2"/>
    <property type="status" value="ALT_INIT"/>
    <property type="molecule type" value="mRNA"/>
</dbReference>
<dbReference type="EMBL" id="AK291056">
    <property type="protein sequence ID" value="BAF83745.1"/>
    <property type="molecule type" value="mRNA"/>
</dbReference>
<dbReference type="EMBL" id="AC026315">
    <property type="status" value="NOT_ANNOTATED_CDS"/>
    <property type="molecule type" value="Genomic_DNA"/>
</dbReference>
<dbReference type="EMBL" id="AC078793">
    <property type="status" value="NOT_ANNOTATED_CDS"/>
    <property type="molecule type" value="Genomic_DNA"/>
</dbReference>
<dbReference type="EMBL" id="AC092919">
    <property type="status" value="NOT_ANNOTATED_CDS"/>
    <property type="molecule type" value="Genomic_DNA"/>
</dbReference>
<dbReference type="EMBL" id="AC137517">
    <property type="status" value="NOT_ANNOTATED_CDS"/>
    <property type="molecule type" value="Genomic_DNA"/>
</dbReference>
<dbReference type="EMBL" id="CH471052">
    <property type="protein sequence ID" value="EAW78484.1"/>
    <property type="molecule type" value="Genomic_DNA"/>
</dbReference>
<dbReference type="EMBL" id="CH471052">
    <property type="protein sequence ID" value="EAW78489.1"/>
    <property type="molecule type" value="Genomic_DNA"/>
</dbReference>
<dbReference type="EMBL" id="CH471052">
    <property type="protein sequence ID" value="EAW78492.1"/>
    <property type="molecule type" value="Genomic_DNA"/>
</dbReference>
<dbReference type="EMBL" id="CH471052">
    <property type="protein sequence ID" value="EAW78493.1"/>
    <property type="molecule type" value="Genomic_DNA"/>
</dbReference>
<dbReference type="EMBL" id="BC019081">
    <property type="protein sequence ID" value="AAH19081.2"/>
    <property type="molecule type" value="mRNA"/>
</dbReference>
<dbReference type="EMBL" id="BC150256">
    <property type="protein sequence ID" value="AAI50257.1"/>
    <property type="molecule type" value="mRNA"/>
</dbReference>
<dbReference type="CCDS" id="CCDS46956.1">
    <molecule id="Q9UKE5-1"/>
</dbReference>
<dbReference type="CCDS" id="CCDS54673.1">
    <molecule id="Q9UKE5-8"/>
</dbReference>
<dbReference type="CCDS" id="CCDS54674.1">
    <molecule id="Q9UKE5-5"/>
</dbReference>
<dbReference type="CCDS" id="CCDS54675.1">
    <molecule id="Q9UKE5-6"/>
</dbReference>
<dbReference type="CCDS" id="CCDS54676.1">
    <molecule id="Q9UKE5-2"/>
</dbReference>
<dbReference type="CCDS" id="CCDS54677.1">
    <molecule id="Q9UKE5-7"/>
</dbReference>
<dbReference type="CCDS" id="CCDS54678.1">
    <molecule id="Q9UKE5-3"/>
</dbReference>
<dbReference type="CCDS" id="CCDS54679.1">
    <molecule id="Q9UKE5-4"/>
</dbReference>
<dbReference type="RefSeq" id="NP_001155032.1">
    <molecule id="Q9UKE5-4"/>
    <property type="nucleotide sequence ID" value="NM_001161560.3"/>
</dbReference>
<dbReference type="RefSeq" id="NP_001155033.1">
    <molecule id="Q9UKE5-2"/>
    <property type="nucleotide sequence ID" value="NM_001161561.3"/>
</dbReference>
<dbReference type="RefSeq" id="NP_001155034.1">
    <molecule id="Q9UKE5-6"/>
    <property type="nucleotide sequence ID" value="NM_001161562.3"/>
</dbReference>
<dbReference type="RefSeq" id="NP_001155035.1">
    <molecule id="Q9UKE5-3"/>
    <property type="nucleotide sequence ID" value="NM_001161563.3"/>
</dbReference>
<dbReference type="RefSeq" id="NP_001155036.1">
    <molecule id="Q9UKE5-7"/>
    <property type="nucleotide sequence ID" value="NM_001161564.3"/>
</dbReference>
<dbReference type="RefSeq" id="NP_001155037.1">
    <molecule id="Q9UKE5-5"/>
    <property type="nucleotide sequence ID" value="NM_001161565.3"/>
</dbReference>
<dbReference type="RefSeq" id="NP_001155038.1">
    <molecule id="Q9UKE5-8"/>
    <property type="nucleotide sequence ID" value="NM_001161566.3"/>
</dbReference>
<dbReference type="RefSeq" id="NP_055843.1">
    <molecule id="Q9UKE5-1"/>
    <property type="nucleotide sequence ID" value="NM_015028.4"/>
</dbReference>
<dbReference type="PDB" id="2X7F">
    <property type="method" value="X-ray"/>
    <property type="resolution" value="2.80 A"/>
    <property type="chains" value="A/B/C/D/E=1-325"/>
</dbReference>
<dbReference type="PDB" id="5AX9">
    <property type="method" value="X-ray"/>
    <property type="resolution" value="2.40 A"/>
    <property type="chains" value="A/B/C=11-314"/>
</dbReference>
<dbReference type="PDB" id="5CWZ">
    <property type="method" value="X-ray"/>
    <property type="resolution" value="2.90 A"/>
    <property type="chains" value="A/B/C=11-314"/>
</dbReference>
<dbReference type="PDB" id="5D7A">
    <property type="method" value="X-ray"/>
    <property type="resolution" value="2.90 A"/>
    <property type="chains" value="A/B/C=11-314"/>
</dbReference>
<dbReference type="PDB" id="6RA5">
    <property type="method" value="X-ray"/>
    <property type="resolution" value="2.90 A"/>
    <property type="chains" value="A/B=11-314"/>
</dbReference>
<dbReference type="PDB" id="6RA7">
    <property type="method" value="X-ray"/>
    <property type="resolution" value="1.20 A"/>
    <property type="chains" value="A=11-314"/>
</dbReference>
<dbReference type="PDB" id="7XZQ">
    <property type="method" value="X-ray"/>
    <property type="resolution" value="2.09 A"/>
    <property type="chains" value="A=11-314"/>
</dbReference>
<dbReference type="PDB" id="7XZR">
    <property type="method" value="X-ray"/>
    <property type="resolution" value="2.26 A"/>
    <property type="chains" value="A/B=11-314"/>
</dbReference>
<dbReference type="PDB" id="8WM0">
    <property type="method" value="X-ray"/>
    <property type="resolution" value="2.80 A"/>
    <property type="chains" value="A=11-314"/>
</dbReference>
<dbReference type="PDB" id="8X88">
    <property type="method" value="X-ray"/>
    <property type="resolution" value="2.70 A"/>
    <property type="chains" value="A/B=11-314"/>
</dbReference>
<dbReference type="PDBsum" id="2X7F"/>
<dbReference type="PDBsum" id="5AX9"/>
<dbReference type="PDBsum" id="5CWZ"/>
<dbReference type="PDBsum" id="5D7A"/>
<dbReference type="PDBsum" id="6RA5"/>
<dbReference type="PDBsum" id="6RA7"/>
<dbReference type="PDBsum" id="7XZQ"/>
<dbReference type="PDBsum" id="7XZR"/>
<dbReference type="PDBsum" id="8WM0"/>
<dbReference type="PDBsum" id="8X88"/>
<dbReference type="SMR" id="Q9UKE5"/>
<dbReference type="BioGRID" id="116682">
    <property type="interactions" value="161"/>
</dbReference>
<dbReference type="DIP" id="DIP-37562N"/>
<dbReference type="FunCoup" id="Q9UKE5">
    <property type="interactions" value="2698"/>
</dbReference>
<dbReference type="IntAct" id="Q9UKE5">
    <property type="interactions" value="195"/>
</dbReference>
<dbReference type="MINT" id="Q9UKE5"/>
<dbReference type="STRING" id="9606.ENSP00000399511"/>
<dbReference type="BindingDB" id="Q9UKE5"/>
<dbReference type="ChEMBL" id="CHEMBL4527"/>
<dbReference type="DrugBank" id="DB12010">
    <property type="generic name" value="Fostamatinib"/>
</dbReference>
<dbReference type="DrugCentral" id="Q9UKE5"/>
<dbReference type="GuidetoPHARMACOLOGY" id="2244"/>
<dbReference type="GlyCosmos" id="Q9UKE5">
    <property type="glycosylation" value="1 site, 1 glycan"/>
</dbReference>
<dbReference type="GlyGen" id="Q9UKE5">
    <property type="glycosylation" value="4 sites, 1 N-linked glycan (1 site), 1 O-linked glycan (2 sites)"/>
</dbReference>
<dbReference type="iPTMnet" id="Q9UKE5"/>
<dbReference type="PhosphoSitePlus" id="Q9UKE5"/>
<dbReference type="SwissPalm" id="Q9UKE5"/>
<dbReference type="BioMuta" id="TNIK"/>
<dbReference type="DMDM" id="29840818"/>
<dbReference type="jPOST" id="Q9UKE5"/>
<dbReference type="MassIVE" id="Q9UKE5"/>
<dbReference type="PaxDb" id="9606-ENSP00000399511"/>
<dbReference type="PeptideAtlas" id="Q9UKE5"/>
<dbReference type="ProteomicsDB" id="84769">
    <molecule id="Q9UKE5-1"/>
</dbReference>
<dbReference type="ProteomicsDB" id="84770">
    <molecule id="Q9UKE5-2"/>
</dbReference>
<dbReference type="ProteomicsDB" id="84771">
    <molecule id="Q9UKE5-3"/>
</dbReference>
<dbReference type="ProteomicsDB" id="84772">
    <molecule id="Q9UKE5-4"/>
</dbReference>
<dbReference type="ProteomicsDB" id="84773">
    <molecule id="Q9UKE5-5"/>
</dbReference>
<dbReference type="ProteomicsDB" id="84774">
    <molecule id="Q9UKE5-6"/>
</dbReference>
<dbReference type="ProteomicsDB" id="84775">
    <molecule id="Q9UKE5-7"/>
</dbReference>
<dbReference type="ProteomicsDB" id="84776">
    <molecule id="Q9UKE5-8"/>
</dbReference>
<dbReference type="Pumba" id="Q9UKE5"/>
<dbReference type="Antibodypedia" id="2086">
    <property type="antibodies" value="551 antibodies from 33 providers"/>
</dbReference>
<dbReference type="DNASU" id="23043"/>
<dbReference type="Ensembl" id="ENST00000284483.12">
    <molecule id="Q9UKE5-4"/>
    <property type="protein sequence ID" value="ENSP00000284483.8"/>
    <property type="gene ID" value="ENSG00000154310.17"/>
</dbReference>
<dbReference type="Ensembl" id="ENST00000341852.10">
    <molecule id="Q9UKE5-5"/>
    <property type="protein sequence ID" value="ENSP00000345352.6"/>
    <property type="gene ID" value="ENSG00000154310.17"/>
</dbReference>
<dbReference type="Ensembl" id="ENST00000357327.9">
    <molecule id="Q9UKE5-2"/>
    <property type="protein sequence ID" value="ENSP00000349880.5"/>
    <property type="gene ID" value="ENSG00000154310.17"/>
</dbReference>
<dbReference type="Ensembl" id="ENST00000436636.7">
    <molecule id="Q9UKE5-1"/>
    <property type="protein sequence ID" value="ENSP00000399511.2"/>
    <property type="gene ID" value="ENSG00000154310.17"/>
</dbReference>
<dbReference type="Ensembl" id="ENST00000460047.5">
    <molecule id="Q9UKE5-7"/>
    <property type="protein sequence ID" value="ENSP00000418916.1"/>
    <property type="gene ID" value="ENSG00000154310.17"/>
</dbReference>
<dbReference type="Ensembl" id="ENST00000470834.5">
    <molecule id="Q9UKE5-6"/>
    <property type="protein sequence ID" value="ENSP00000419990.1"/>
    <property type="gene ID" value="ENSG00000154310.17"/>
</dbReference>
<dbReference type="Ensembl" id="ENST00000475336.5">
    <molecule id="Q9UKE5-8"/>
    <property type="protein sequence ID" value="ENSP00000418156.1"/>
    <property type="gene ID" value="ENSG00000154310.17"/>
</dbReference>
<dbReference type="Ensembl" id="ENST00000488470.5">
    <molecule id="Q9UKE5-3"/>
    <property type="protein sequence ID" value="ENSP00000418378.1"/>
    <property type="gene ID" value="ENSG00000154310.17"/>
</dbReference>
<dbReference type="GeneID" id="23043"/>
<dbReference type="KEGG" id="hsa:23043"/>
<dbReference type="MANE-Select" id="ENST00000436636.7">
    <property type="protein sequence ID" value="ENSP00000399511.2"/>
    <property type="RefSeq nucleotide sequence ID" value="NM_015028.4"/>
    <property type="RefSeq protein sequence ID" value="NP_055843.1"/>
</dbReference>
<dbReference type="UCSC" id="uc003fhh.3">
    <molecule id="Q9UKE5-1"/>
    <property type="organism name" value="human"/>
</dbReference>
<dbReference type="AGR" id="HGNC:30765"/>
<dbReference type="CTD" id="23043"/>
<dbReference type="DisGeNET" id="23043"/>
<dbReference type="GeneCards" id="TNIK"/>
<dbReference type="HGNC" id="HGNC:30765">
    <property type="gene designation" value="TNIK"/>
</dbReference>
<dbReference type="HPA" id="ENSG00000154310">
    <property type="expression patterns" value="Tissue enhanced (brain)"/>
</dbReference>
<dbReference type="MalaCards" id="TNIK"/>
<dbReference type="MIM" id="610005">
    <property type="type" value="gene"/>
</dbReference>
<dbReference type="MIM" id="617028">
    <property type="type" value="phenotype"/>
</dbReference>
<dbReference type="neXtProt" id="NX_Q9UKE5"/>
<dbReference type="OpenTargets" id="ENSG00000154310"/>
<dbReference type="Orphanet" id="88616">
    <property type="disease" value="Autosomal recessive non-syndromic intellectual disability"/>
</dbReference>
<dbReference type="PharmGKB" id="PA134893180"/>
<dbReference type="VEuPathDB" id="HostDB:ENSG00000154310"/>
<dbReference type="eggNOG" id="KOG0587">
    <property type="taxonomic scope" value="Eukaryota"/>
</dbReference>
<dbReference type="GeneTree" id="ENSGT00950000183196"/>
<dbReference type="InParanoid" id="Q9UKE5"/>
<dbReference type="OMA" id="MDTGTEY"/>
<dbReference type="OrthoDB" id="8957712at2759"/>
<dbReference type="PAN-GO" id="Q9UKE5">
    <property type="GO annotations" value="6 GO annotations based on evolutionary models"/>
</dbReference>
<dbReference type="PhylomeDB" id="Q9UKE5"/>
<dbReference type="TreeFam" id="TF105138"/>
<dbReference type="PathwayCommons" id="Q9UKE5"/>
<dbReference type="Reactome" id="R-HSA-2559580">
    <property type="pathway name" value="Oxidative Stress Induced Senescence"/>
</dbReference>
<dbReference type="SignaLink" id="Q9UKE5"/>
<dbReference type="SIGNOR" id="Q9UKE5"/>
<dbReference type="BioGRID-ORCS" id="23043">
    <property type="hits" value="14 hits in 1193 CRISPR screens"/>
</dbReference>
<dbReference type="ChiTaRS" id="TNIK">
    <property type="organism name" value="human"/>
</dbReference>
<dbReference type="EvolutionaryTrace" id="Q9UKE5"/>
<dbReference type="GeneWiki" id="TNIK"/>
<dbReference type="GenomeRNAi" id="23043"/>
<dbReference type="Pharos" id="Q9UKE5">
    <property type="development level" value="Tchem"/>
</dbReference>
<dbReference type="PRO" id="PR:Q9UKE5"/>
<dbReference type="Proteomes" id="UP000005640">
    <property type="component" value="Chromosome 3"/>
</dbReference>
<dbReference type="RNAct" id="Q9UKE5">
    <property type="molecule type" value="protein"/>
</dbReference>
<dbReference type="Bgee" id="ENSG00000154310">
    <property type="expression patterns" value="Expressed in cortical plate and 192 other cell types or tissues"/>
</dbReference>
<dbReference type="ExpressionAtlas" id="Q9UKE5">
    <property type="expression patterns" value="baseline and differential"/>
</dbReference>
<dbReference type="GO" id="GO:0016324">
    <property type="term" value="C:apical plasma membrane"/>
    <property type="evidence" value="ECO:0000314"/>
    <property type="project" value="UniProtKB"/>
</dbReference>
<dbReference type="GO" id="GO:0005737">
    <property type="term" value="C:cytoplasm"/>
    <property type="evidence" value="ECO:0000314"/>
    <property type="project" value="UniProtKB"/>
</dbReference>
<dbReference type="GO" id="GO:0005856">
    <property type="term" value="C:cytoskeleton"/>
    <property type="evidence" value="ECO:0000314"/>
    <property type="project" value="UniProtKB"/>
</dbReference>
<dbReference type="GO" id="GO:0005829">
    <property type="term" value="C:cytosol"/>
    <property type="evidence" value="ECO:0000314"/>
    <property type="project" value="HPA"/>
</dbReference>
<dbReference type="GO" id="GO:0070062">
    <property type="term" value="C:extracellular exosome"/>
    <property type="evidence" value="ECO:0007005"/>
    <property type="project" value="UniProtKB"/>
</dbReference>
<dbReference type="GO" id="GO:0098978">
    <property type="term" value="C:glutamatergic synapse"/>
    <property type="evidence" value="ECO:0007669"/>
    <property type="project" value="Ensembl"/>
</dbReference>
<dbReference type="GO" id="GO:0005654">
    <property type="term" value="C:nucleoplasm"/>
    <property type="evidence" value="ECO:0000314"/>
    <property type="project" value="HPA"/>
</dbReference>
<dbReference type="GO" id="GO:0005634">
    <property type="term" value="C:nucleus"/>
    <property type="evidence" value="ECO:0000314"/>
    <property type="project" value="UniProtKB"/>
</dbReference>
<dbReference type="GO" id="GO:0099092">
    <property type="term" value="C:postsynaptic density, intracellular component"/>
    <property type="evidence" value="ECO:0007669"/>
    <property type="project" value="Ensembl"/>
</dbReference>
<dbReference type="GO" id="GO:0098793">
    <property type="term" value="C:presynapse"/>
    <property type="evidence" value="ECO:0007669"/>
    <property type="project" value="Ensembl"/>
</dbReference>
<dbReference type="GO" id="GO:0055037">
    <property type="term" value="C:recycling endosome"/>
    <property type="evidence" value="ECO:0007669"/>
    <property type="project" value="UniProtKB-SubCell"/>
</dbReference>
<dbReference type="GO" id="GO:0005524">
    <property type="term" value="F:ATP binding"/>
    <property type="evidence" value="ECO:0007669"/>
    <property type="project" value="UniProtKB-KW"/>
</dbReference>
<dbReference type="GO" id="GO:0004672">
    <property type="term" value="F:protein kinase activity"/>
    <property type="evidence" value="ECO:0000314"/>
    <property type="project" value="UniProtKB"/>
</dbReference>
<dbReference type="GO" id="GO:0106310">
    <property type="term" value="F:protein serine kinase activity"/>
    <property type="evidence" value="ECO:0007669"/>
    <property type="project" value="RHEA"/>
</dbReference>
<dbReference type="GO" id="GO:0004674">
    <property type="term" value="F:protein serine/threonine kinase activity"/>
    <property type="evidence" value="ECO:0000314"/>
    <property type="project" value="UniProtKB"/>
</dbReference>
<dbReference type="GO" id="GO:0030036">
    <property type="term" value="P:actin cytoskeleton organization"/>
    <property type="evidence" value="ECO:0000314"/>
    <property type="project" value="UniProtKB"/>
</dbReference>
<dbReference type="GO" id="GO:0007010">
    <property type="term" value="P:cytoskeleton organization"/>
    <property type="evidence" value="ECO:0000315"/>
    <property type="project" value="UniProtKB"/>
</dbReference>
<dbReference type="GO" id="GO:0035556">
    <property type="term" value="P:intracellular signal transduction"/>
    <property type="evidence" value="ECO:0000314"/>
    <property type="project" value="UniProtKB"/>
</dbReference>
<dbReference type="GO" id="GO:0000165">
    <property type="term" value="P:MAPK cascade"/>
    <property type="evidence" value="ECO:0000318"/>
    <property type="project" value="GO_Central"/>
</dbReference>
<dbReference type="GO" id="GO:0030033">
    <property type="term" value="P:microvillus assembly"/>
    <property type="evidence" value="ECO:0000315"/>
    <property type="project" value="UniProtKB"/>
</dbReference>
<dbReference type="GO" id="GO:0048812">
    <property type="term" value="P:neuron projection morphogenesis"/>
    <property type="evidence" value="ECO:0000318"/>
    <property type="project" value="GO_Central"/>
</dbReference>
<dbReference type="GO" id="GO:0046330">
    <property type="term" value="P:positive regulation of JNK cascade"/>
    <property type="evidence" value="ECO:0000314"/>
    <property type="project" value="UniProtKB"/>
</dbReference>
<dbReference type="GO" id="GO:0001934">
    <property type="term" value="P:positive regulation of protein phosphorylation"/>
    <property type="evidence" value="ECO:0000315"/>
    <property type="project" value="UniProtKB"/>
</dbReference>
<dbReference type="GO" id="GO:0046777">
    <property type="term" value="P:protein autophosphorylation"/>
    <property type="evidence" value="ECO:0000314"/>
    <property type="project" value="UniProtKB"/>
</dbReference>
<dbReference type="GO" id="GO:0072659">
    <property type="term" value="P:protein localization to plasma membrane"/>
    <property type="evidence" value="ECO:0000315"/>
    <property type="project" value="UniProtKB"/>
</dbReference>
<dbReference type="GO" id="GO:0006468">
    <property type="term" value="P:protein phosphorylation"/>
    <property type="evidence" value="ECO:0000314"/>
    <property type="project" value="UniProtKB"/>
</dbReference>
<dbReference type="GO" id="GO:0048814">
    <property type="term" value="P:regulation of dendrite morphogenesis"/>
    <property type="evidence" value="ECO:0000314"/>
    <property type="project" value="UniProtKB"/>
</dbReference>
<dbReference type="GO" id="GO:0043408">
    <property type="term" value="P:regulation of MAPK cascade"/>
    <property type="evidence" value="ECO:0000318"/>
    <property type="project" value="GO_Central"/>
</dbReference>
<dbReference type="GO" id="GO:0016055">
    <property type="term" value="P:Wnt signaling pathway"/>
    <property type="evidence" value="ECO:0007669"/>
    <property type="project" value="UniProtKB-KW"/>
</dbReference>
<dbReference type="CDD" id="cd06637">
    <property type="entry name" value="STKc_TNIK"/>
    <property type="match status" value="1"/>
</dbReference>
<dbReference type="FunFam" id="1.10.510.10:FF:000003">
    <property type="entry name" value="TRAF2 and NCK-interacting protein kinase isoform 4"/>
    <property type="match status" value="1"/>
</dbReference>
<dbReference type="FunFam" id="3.30.200.20:FF:000006">
    <property type="entry name" value="TRAF2 and NCK-interacting protein kinase isoform 4"/>
    <property type="match status" value="1"/>
</dbReference>
<dbReference type="Gene3D" id="3.30.200.20">
    <property type="entry name" value="Phosphorylase Kinase, domain 1"/>
    <property type="match status" value="1"/>
</dbReference>
<dbReference type="Gene3D" id="1.10.510.10">
    <property type="entry name" value="Transferase(Phosphotransferase) domain 1"/>
    <property type="match status" value="1"/>
</dbReference>
<dbReference type="InterPro" id="IPR001180">
    <property type="entry name" value="CNH_dom"/>
</dbReference>
<dbReference type="InterPro" id="IPR011009">
    <property type="entry name" value="Kinase-like_dom_sf"/>
</dbReference>
<dbReference type="InterPro" id="IPR000719">
    <property type="entry name" value="Prot_kinase_dom"/>
</dbReference>
<dbReference type="InterPro" id="IPR017441">
    <property type="entry name" value="Protein_kinase_ATP_BS"/>
</dbReference>
<dbReference type="InterPro" id="IPR008271">
    <property type="entry name" value="Ser/Thr_kinase_AS"/>
</dbReference>
<dbReference type="InterPro" id="IPR051700">
    <property type="entry name" value="STE20_Ser-Thr_kinase"/>
</dbReference>
<dbReference type="PANTHER" id="PTHR47096">
    <property type="entry name" value="MISSHAPEN LIKE KINASE 1"/>
    <property type="match status" value="1"/>
</dbReference>
<dbReference type="PANTHER" id="PTHR47096:SF1">
    <property type="entry name" value="MISSHAPEN LIKE KINASE 1"/>
    <property type="match status" value="1"/>
</dbReference>
<dbReference type="Pfam" id="PF00780">
    <property type="entry name" value="CNH"/>
    <property type="match status" value="1"/>
</dbReference>
<dbReference type="Pfam" id="PF00069">
    <property type="entry name" value="Pkinase"/>
    <property type="match status" value="1"/>
</dbReference>
<dbReference type="SMART" id="SM00036">
    <property type="entry name" value="CNH"/>
    <property type="match status" value="1"/>
</dbReference>
<dbReference type="SMART" id="SM00220">
    <property type="entry name" value="S_TKc"/>
    <property type="match status" value="1"/>
</dbReference>
<dbReference type="SUPFAM" id="SSF56112">
    <property type="entry name" value="Protein kinase-like (PK-like)"/>
    <property type="match status" value="1"/>
</dbReference>
<dbReference type="PROSITE" id="PS50219">
    <property type="entry name" value="CNH"/>
    <property type="match status" value="1"/>
</dbReference>
<dbReference type="PROSITE" id="PS00107">
    <property type="entry name" value="PROTEIN_KINASE_ATP"/>
    <property type="match status" value="1"/>
</dbReference>
<dbReference type="PROSITE" id="PS50011">
    <property type="entry name" value="PROTEIN_KINASE_DOM"/>
    <property type="match status" value="1"/>
</dbReference>
<dbReference type="PROSITE" id="PS00108">
    <property type="entry name" value="PROTEIN_KINASE_ST"/>
    <property type="match status" value="1"/>
</dbReference>
<organism evidence="19">
    <name type="scientific">Homo sapiens</name>
    <name type="common">Human</name>
    <dbReference type="NCBI Taxonomy" id="9606"/>
    <lineage>
        <taxon>Eukaryota</taxon>
        <taxon>Metazoa</taxon>
        <taxon>Chordata</taxon>
        <taxon>Craniata</taxon>
        <taxon>Vertebrata</taxon>
        <taxon>Euteleostomi</taxon>
        <taxon>Mammalia</taxon>
        <taxon>Eutheria</taxon>
        <taxon>Euarchontoglires</taxon>
        <taxon>Primates</taxon>
        <taxon>Haplorrhini</taxon>
        <taxon>Catarrhini</taxon>
        <taxon>Hominidae</taxon>
        <taxon>Homo</taxon>
    </lineage>
</organism>
<sequence length="1360" mass="154943">MASDSPARSLDEIDLSALRDPAGIFELVELVGNGTYGQVYKGRHVKTGQLAAIKVMDVTGDEEEEIKQEINMLKKYSHHRNIATYYGAFIKKNPPGMDDQLWLVMEFCGAGSVTDLIKNTKGNTLKEEWIAYICREILRGLSHLHQHKVIHRDIKGQNVLLTENAEVKLVDFGVSAQLDRTVGRRNTFIGTPYWMAPEVIACDENPDATYDFKSDLWSLGITAIEMAEGAPPLCDMHPMRALFLIPRNPAPRLKSKKWSKKFQSFIESCLVKNHSQRPATEQLMKHPFIRDQPNERQVRIQLKDHIDRTKKKRGEKDETEYEYSGSEEEEEENDSGEPSSILNLPGESTLRRDFLRLQLANKERSEALRRQQLEQQQRENEEHKRQLLAERQKRIEEQKEQRRRLEEQQRREKELRKQQEREQRRHYEEQMRREEERRRAEHEQEYIRRQLEEEQRQLEILQQQLLHEQALLLEYKRKQLEEQRQAERLQRQLKQERDYLVSLQHQRQEQRPVEKKPLYHYKEGMSPSEKPAWAKEVEERSRLNRQSSPAMPHKVANRISDPNLPPRSESFSISGVQPARTPPMLRPVDPQIPHLVAVKSQGPALTASQSVHEQPTKGLSGFQEALNVTSHRVEMPRQNSDPTSENPPLPTRIEKFDRSSWLRQEEDIPPKVPQRTTSISPALARKNSPGNGSALGPRLGSQPIRASNPDLRRTEPILESPLQRTSSGSSSSSSTPSSQPSSQGGSQPGSQAGSSERTRVRANSKSEGSPVLPHEPAKVKPEESRDITRPSRPASYKKAIDEDLTALAKELRELRIEETNRPMKKVTDYSSSSEESESSEEEEEDGESETHDGTVAVSDIPRLIPTGAPGSNEQYNVGMVGTHGLETSHADSFSGSISREGTLMIRETSGEKKRSGHSDSNGFAGHINLPDLVQQSHSPAGTPTEGLGRVSTHSQEMDSGTEYGMGSSTKASFTPFVDPRVYQTSPTDEDEEDEESSAAALFTSELLRQEQAKLNEARKISVVNVNPTNIRPHSDTPEIRKYKKRFNSEILCAALWGVNLLVGTENGLMLLDRSGQGKVYNLINRRRFQQMDVLEGLNVLVTISGKKNKLRVYYLSWLRNRILHNDPEVEKKQGWITVGDLEGCIHYKVVKYERIKFLVIALKNAVEIYAWAPKPYHKFMAFKSFADLQHKPLLVDLTVEEGQRLKVIFGSHTGFHVIDVDSGNSYDIYIPSHIQGNITPHAIVILPKTDGMEMLVCYEDEGVYVNTYGRITKDVVLQWGEMPTSVAYIHSNQIMGWGEKAIEIRSVETGHLDGVFMHKRAQRLKFLCERNDKVFFASVRSGGSSQVFFMTLNRNSMMNW</sequence>
<reference evidence="18" key="1">
    <citation type="journal article" date="1999" name="J. Biol. Chem.">
        <title>TNIK, a novel member of the germinal center kinase family that activates the c-Jun N-terminal kinase pathway and regulates the cytoskeleton.</title>
        <authorList>
            <person name="Fu C.A."/>
            <person name="Shen M."/>
            <person name="Huang B.C."/>
            <person name="Lasaga J."/>
            <person name="Payan D.G."/>
            <person name="Luo Y."/>
        </authorList>
    </citation>
    <scope>NUCLEOTIDE SEQUENCE [MRNA] (ISOFORMS 1; 2; 3; 4; 5; 6; 7 AND 8)</scope>
    <scope>FUNCTION</scope>
    <scope>TISSUE SPECIFICITY</scope>
    <scope>INTERACTION WITH TRAF2 AND NCK</scope>
    <scope>AUTOPHOSPHORYLATION</scope>
</reference>
<reference evidence="18" key="2">
    <citation type="journal article" date="1998" name="DNA Res.">
        <title>Prediction of the coding sequences of unidentified human genes. IX. The complete sequences of 100 new cDNA clones from brain which can code for large proteins in vitro.</title>
        <authorList>
            <person name="Nagase T."/>
            <person name="Ishikawa K."/>
            <person name="Miyajima N."/>
            <person name="Tanaka A."/>
            <person name="Kotani H."/>
            <person name="Nomura N."/>
            <person name="Ohara O."/>
        </authorList>
    </citation>
    <scope>NUCLEOTIDE SEQUENCE [LARGE SCALE MRNA] (ISOFORM 1)</scope>
    <source>
        <tissue>Brain</tissue>
    </source>
</reference>
<reference evidence="18" key="3">
    <citation type="journal article" date="2002" name="DNA Res.">
        <title>Construction of expression-ready cDNA clones for KIAA genes: manual curation of 330 KIAA cDNA clones.</title>
        <authorList>
            <person name="Nakajima D."/>
            <person name="Okazaki N."/>
            <person name="Yamakawa H."/>
            <person name="Kikuno R."/>
            <person name="Ohara O."/>
            <person name="Nagase T."/>
        </authorList>
    </citation>
    <scope>SEQUENCE REVISION</scope>
</reference>
<reference key="4">
    <citation type="journal article" date="2004" name="Nat. Genet.">
        <title>Complete sequencing and characterization of 21,243 full-length human cDNAs.</title>
        <authorList>
            <person name="Ota T."/>
            <person name="Suzuki Y."/>
            <person name="Nishikawa T."/>
            <person name="Otsuki T."/>
            <person name="Sugiyama T."/>
            <person name="Irie R."/>
            <person name="Wakamatsu A."/>
            <person name="Hayashi K."/>
            <person name="Sato H."/>
            <person name="Nagai K."/>
            <person name="Kimura K."/>
            <person name="Makita H."/>
            <person name="Sekine M."/>
            <person name="Obayashi M."/>
            <person name="Nishi T."/>
            <person name="Shibahara T."/>
            <person name="Tanaka T."/>
            <person name="Ishii S."/>
            <person name="Yamamoto J."/>
            <person name="Saito K."/>
            <person name="Kawai Y."/>
            <person name="Isono Y."/>
            <person name="Nakamura Y."/>
            <person name="Nagahari K."/>
            <person name="Murakami K."/>
            <person name="Yasuda T."/>
            <person name="Iwayanagi T."/>
            <person name="Wagatsuma M."/>
            <person name="Shiratori A."/>
            <person name="Sudo H."/>
            <person name="Hosoiri T."/>
            <person name="Kaku Y."/>
            <person name="Kodaira H."/>
            <person name="Kondo H."/>
            <person name="Sugawara M."/>
            <person name="Takahashi M."/>
            <person name="Kanda K."/>
            <person name="Yokoi T."/>
            <person name="Furuya T."/>
            <person name="Kikkawa E."/>
            <person name="Omura Y."/>
            <person name="Abe K."/>
            <person name="Kamihara K."/>
            <person name="Katsuta N."/>
            <person name="Sato K."/>
            <person name="Tanikawa M."/>
            <person name="Yamazaki M."/>
            <person name="Ninomiya K."/>
            <person name="Ishibashi T."/>
            <person name="Yamashita H."/>
            <person name="Murakawa K."/>
            <person name="Fujimori K."/>
            <person name="Tanai H."/>
            <person name="Kimata M."/>
            <person name="Watanabe M."/>
            <person name="Hiraoka S."/>
            <person name="Chiba Y."/>
            <person name="Ishida S."/>
            <person name="Ono Y."/>
            <person name="Takiguchi S."/>
            <person name="Watanabe S."/>
            <person name="Yosida M."/>
            <person name="Hotuta T."/>
            <person name="Kusano J."/>
            <person name="Kanehori K."/>
            <person name="Takahashi-Fujii A."/>
            <person name="Hara H."/>
            <person name="Tanase T.-O."/>
            <person name="Nomura Y."/>
            <person name="Togiya S."/>
            <person name="Komai F."/>
            <person name="Hara R."/>
            <person name="Takeuchi K."/>
            <person name="Arita M."/>
            <person name="Imose N."/>
            <person name="Musashino K."/>
            <person name="Yuuki H."/>
            <person name="Oshima A."/>
            <person name="Sasaki N."/>
            <person name="Aotsuka S."/>
            <person name="Yoshikawa Y."/>
            <person name="Matsunawa H."/>
            <person name="Ichihara T."/>
            <person name="Shiohata N."/>
            <person name="Sano S."/>
            <person name="Moriya S."/>
            <person name="Momiyama H."/>
            <person name="Satoh N."/>
            <person name="Takami S."/>
            <person name="Terashima Y."/>
            <person name="Suzuki O."/>
            <person name="Nakagawa S."/>
            <person name="Senoh A."/>
            <person name="Mizoguchi H."/>
            <person name="Goto Y."/>
            <person name="Shimizu F."/>
            <person name="Wakebe H."/>
            <person name="Hishigaki H."/>
            <person name="Watanabe T."/>
            <person name="Sugiyama A."/>
            <person name="Takemoto M."/>
            <person name="Kawakami B."/>
            <person name="Yamazaki M."/>
            <person name="Watanabe K."/>
            <person name="Kumagai A."/>
            <person name="Itakura S."/>
            <person name="Fukuzumi Y."/>
            <person name="Fujimori Y."/>
            <person name="Komiyama M."/>
            <person name="Tashiro H."/>
            <person name="Tanigami A."/>
            <person name="Fujiwara T."/>
            <person name="Ono T."/>
            <person name="Yamada K."/>
            <person name="Fujii Y."/>
            <person name="Ozaki K."/>
            <person name="Hirao M."/>
            <person name="Ohmori Y."/>
            <person name="Kawabata A."/>
            <person name="Hikiji T."/>
            <person name="Kobatake N."/>
            <person name="Inagaki H."/>
            <person name="Ikema Y."/>
            <person name="Okamoto S."/>
            <person name="Okitani R."/>
            <person name="Kawakami T."/>
            <person name="Noguchi S."/>
            <person name="Itoh T."/>
            <person name="Shigeta K."/>
            <person name="Senba T."/>
            <person name="Matsumura K."/>
            <person name="Nakajima Y."/>
            <person name="Mizuno T."/>
            <person name="Morinaga M."/>
            <person name="Sasaki M."/>
            <person name="Togashi T."/>
            <person name="Oyama M."/>
            <person name="Hata H."/>
            <person name="Watanabe M."/>
            <person name="Komatsu T."/>
            <person name="Mizushima-Sugano J."/>
            <person name="Satoh T."/>
            <person name="Shirai Y."/>
            <person name="Takahashi Y."/>
            <person name="Nakagawa K."/>
            <person name="Okumura K."/>
            <person name="Nagase T."/>
            <person name="Nomura N."/>
            <person name="Kikuchi H."/>
            <person name="Masuho Y."/>
            <person name="Yamashita R."/>
            <person name="Nakai K."/>
            <person name="Yada T."/>
            <person name="Nakamura Y."/>
            <person name="Ohara O."/>
            <person name="Isogai T."/>
            <person name="Sugano S."/>
        </authorList>
    </citation>
    <scope>NUCLEOTIDE SEQUENCE [LARGE SCALE MRNA] (ISOFORM 5)</scope>
</reference>
<reference key="5">
    <citation type="journal article" date="2006" name="Nature">
        <title>The DNA sequence, annotation and analysis of human chromosome 3.</title>
        <authorList>
            <person name="Muzny D.M."/>
            <person name="Scherer S.E."/>
            <person name="Kaul R."/>
            <person name="Wang J."/>
            <person name="Yu J."/>
            <person name="Sudbrak R."/>
            <person name="Buhay C.J."/>
            <person name="Chen R."/>
            <person name="Cree A."/>
            <person name="Ding Y."/>
            <person name="Dugan-Rocha S."/>
            <person name="Gill R."/>
            <person name="Gunaratne P."/>
            <person name="Harris R.A."/>
            <person name="Hawes A.C."/>
            <person name="Hernandez J."/>
            <person name="Hodgson A.V."/>
            <person name="Hume J."/>
            <person name="Jackson A."/>
            <person name="Khan Z.M."/>
            <person name="Kovar-Smith C."/>
            <person name="Lewis L.R."/>
            <person name="Lozado R.J."/>
            <person name="Metzker M.L."/>
            <person name="Milosavljevic A."/>
            <person name="Miner G.R."/>
            <person name="Morgan M.B."/>
            <person name="Nazareth L.V."/>
            <person name="Scott G."/>
            <person name="Sodergren E."/>
            <person name="Song X.-Z."/>
            <person name="Steffen D."/>
            <person name="Wei S."/>
            <person name="Wheeler D.A."/>
            <person name="Wright M.W."/>
            <person name="Worley K.C."/>
            <person name="Yuan Y."/>
            <person name="Zhang Z."/>
            <person name="Adams C.Q."/>
            <person name="Ansari-Lari M.A."/>
            <person name="Ayele M."/>
            <person name="Brown M.J."/>
            <person name="Chen G."/>
            <person name="Chen Z."/>
            <person name="Clendenning J."/>
            <person name="Clerc-Blankenburg K.P."/>
            <person name="Chen R."/>
            <person name="Chen Z."/>
            <person name="Davis C."/>
            <person name="Delgado O."/>
            <person name="Dinh H.H."/>
            <person name="Dong W."/>
            <person name="Draper H."/>
            <person name="Ernst S."/>
            <person name="Fu G."/>
            <person name="Gonzalez-Garay M.L."/>
            <person name="Garcia D.K."/>
            <person name="Gillett W."/>
            <person name="Gu J."/>
            <person name="Hao B."/>
            <person name="Haugen E."/>
            <person name="Havlak P."/>
            <person name="He X."/>
            <person name="Hennig S."/>
            <person name="Hu S."/>
            <person name="Huang W."/>
            <person name="Jackson L.R."/>
            <person name="Jacob L.S."/>
            <person name="Kelly S.H."/>
            <person name="Kube M."/>
            <person name="Levy R."/>
            <person name="Li Z."/>
            <person name="Liu B."/>
            <person name="Liu J."/>
            <person name="Liu W."/>
            <person name="Lu J."/>
            <person name="Maheshwari M."/>
            <person name="Nguyen B.-V."/>
            <person name="Okwuonu G.O."/>
            <person name="Palmeiri A."/>
            <person name="Pasternak S."/>
            <person name="Perez L.M."/>
            <person name="Phelps K.A."/>
            <person name="Plopper F.J."/>
            <person name="Qiang B."/>
            <person name="Raymond C."/>
            <person name="Rodriguez R."/>
            <person name="Saenphimmachak C."/>
            <person name="Santibanez J."/>
            <person name="Shen H."/>
            <person name="Shen Y."/>
            <person name="Subramanian S."/>
            <person name="Tabor P.E."/>
            <person name="Verduzco D."/>
            <person name="Waldron L."/>
            <person name="Wang J."/>
            <person name="Wang J."/>
            <person name="Wang Q."/>
            <person name="Williams G.A."/>
            <person name="Wong G.K.-S."/>
            <person name="Yao Z."/>
            <person name="Zhang J."/>
            <person name="Zhang X."/>
            <person name="Zhao G."/>
            <person name="Zhou J."/>
            <person name="Zhou Y."/>
            <person name="Nelson D."/>
            <person name="Lehrach H."/>
            <person name="Reinhardt R."/>
            <person name="Naylor S.L."/>
            <person name="Yang H."/>
            <person name="Olson M."/>
            <person name="Weinstock G."/>
            <person name="Gibbs R.A."/>
        </authorList>
    </citation>
    <scope>NUCLEOTIDE SEQUENCE [LARGE SCALE GENOMIC DNA]</scope>
</reference>
<reference evidence="18" key="6">
    <citation type="submission" date="2005-09" db="EMBL/GenBank/DDBJ databases">
        <authorList>
            <person name="Mural R.J."/>
            <person name="Istrail S."/>
            <person name="Sutton G.G."/>
            <person name="Florea L."/>
            <person name="Halpern A.L."/>
            <person name="Mobarry C.M."/>
            <person name="Lippert R."/>
            <person name="Walenz B."/>
            <person name="Shatkay H."/>
            <person name="Dew I."/>
            <person name="Miller J.R."/>
            <person name="Flanigan M.J."/>
            <person name="Edwards N.J."/>
            <person name="Bolanos R."/>
            <person name="Fasulo D."/>
            <person name="Halldorsson B.V."/>
            <person name="Hannenhalli S."/>
            <person name="Turner R."/>
            <person name="Yooseph S."/>
            <person name="Lu F."/>
            <person name="Nusskern D.R."/>
            <person name="Shue B.C."/>
            <person name="Zheng X.H."/>
            <person name="Zhong F."/>
            <person name="Delcher A.L."/>
            <person name="Huson D.H."/>
            <person name="Kravitz S.A."/>
            <person name="Mouchard L."/>
            <person name="Reinert K."/>
            <person name="Remington K.A."/>
            <person name="Clark A.G."/>
            <person name="Waterman M.S."/>
            <person name="Eichler E.E."/>
            <person name="Adams M.D."/>
            <person name="Hunkapiller M.W."/>
            <person name="Myers E.W."/>
            <person name="Venter J.C."/>
        </authorList>
    </citation>
    <scope>NUCLEOTIDE SEQUENCE [LARGE SCALE GENOMIC DNA]</scope>
</reference>
<reference key="7">
    <citation type="journal article" date="2004" name="Genome Res.">
        <title>The status, quality, and expansion of the NIH full-length cDNA project: the Mammalian Gene Collection (MGC).</title>
        <authorList>
            <consortium name="The MGC Project Team"/>
        </authorList>
    </citation>
    <scope>NUCLEOTIDE SEQUENCE [LARGE SCALE MRNA] (ISOFORM 1)</scope>
    <source>
        <tissue>Placenta</tissue>
    </source>
</reference>
<reference key="8">
    <citation type="journal article" date="2004" name="Anal. Chem.">
        <title>Robust phosphoproteomic profiling of tyrosine phosphorylation sites from human T cells using immobilized metal affinity chromatography and tandem mass spectrometry.</title>
        <authorList>
            <person name="Brill L.M."/>
            <person name="Salomon A.R."/>
            <person name="Ficarro S.B."/>
            <person name="Mukherji M."/>
            <person name="Stettler-Gill M."/>
            <person name="Peters E.C."/>
        </authorList>
    </citation>
    <scope>PHOSPHORYLATION [LARGE SCALE ANALYSIS] AT SER-769</scope>
    <scope>IDENTIFICATION BY MASS SPECTROMETRY [LARGE SCALE ANALYSIS]</scope>
    <source>
        <tissue>Leukemic T-cell</tissue>
    </source>
</reference>
<reference key="9">
    <citation type="journal article" date="2004" name="J. Biol. Chem.">
        <title>The Traf2- and Nck-interacting kinase as a putative effector of Rap2 to regulate actin cytoskeleton.</title>
        <authorList>
            <person name="Taira K."/>
            <person name="Umikawa M."/>
            <person name="Takei K."/>
            <person name="Myagmar B.-E."/>
            <person name="Shinzato M."/>
            <person name="Machida N."/>
            <person name="Uezato H."/>
            <person name="Nonaka S."/>
            <person name="Kariya K."/>
        </authorList>
    </citation>
    <scope>FUNCTION</scope>
    <scope>INTERACTION WITH RAP2A</scope>
    <scope>SUBCELLULAR LOCATION</scope>
    <scope>AUTOPHOSPHORYLATION</scope>
    <scope>MUTAGENESIS OF LYS-54</scope>
</reference>
<reference key="10">
    <citation type="journal article" date="2008" name="Biochem. Biophys. Res. Commun.">
        <title>MINK is a Rap2 effector for phosphorylation of the postsynaptic scaffold protein TANC1.</title>
        <authorList>
            <person name="Nonaka H."/>
            <person name="Takei K."/>
            <person name="Umikawa M."/>
            <person name="Oshiro M."/>
            <person name="Kuninaka K."/>
            <person name="Bayarjargal M."/>
            <person name="Asato T."/>
            <person name="Yamashiro Y."/>
            <person name="Uechi Y."/>
            <person name="Endo S."/>
            <person name="Suzuki T."/>
            <person name="Kariya K."/>
        </authorList>
    </citation>
    <scope>INTERACTION WITH TANC1</scope>
</reference>
<reference key="11">
    <citation type="journal article" date="2008" name="J. Proteome Res.">
        <title>Phosphoproteome of resting human platelets.</title>
        <authorList>
            <person name="Zahedi R.P."/>
            <person name="Lewandrowski U."/>
            <person name="Wiesner J."/>
            <person name="Wortelkamp S."/>
            <person name="Moebius J."/>
            <person name="Schuetz C."/>
            <person name="Walter U."/>
            <person name="Gambaryan S."/>
            <person name="Sickmann A."/>
        </authorList>
    </citation>
    <scope>PHOSPHORYLATION [LARGE SCALE ANALYSIS] AT SER-640 AND SER-769</scope>
    <scope>IDENTIFICATION BY MASS SPECTROMETRY [LARGE SCALE ANALYSIS]</scope>
    <source>
        <tissue>Platelet</tissue>
    </source>
</reference>
<reference key="12">
    <citation type="journal article" date="2008" name="Mol. Cell">
        <title>Kinase-selective enrichment enables quantitative phosphoproteomics of the kinome across the cell cycle.</title>
        <authorList>
            <person name="Daub H."/>
            <person name="Olsen J.V."/>
            <person name="Bairlein M."/>
            <person name="Gnad F."/>
            <person name="Oppermann F.S."/>
            <person name="Korner R."/>
            <person name="Greff Z."/>
            <person name="Keri G."/>
            <person name="Stemmann O."/>
            <person name="Mann M."/>
        </authorList>
    </citation>
    <scope>PHOSPHORYLATION [LARGE SCALE ANALYSIS] AT SER-640; SER-688; SER-720 AND SER-769</scope>
    <scope>IDENTIFICATION BY MASS SPECTROMETRY [LARGE SCALE ANALYSIS]</scope>
    <source>
        <tissue>Cervix carcinoma</tissue>
    </source>
</reference>
<reference key="13">
    <citation type="journal article" date="2008" name="Proc. Natl. Acad. Sci. U.S.A.">
        <title>A quantitative atlas of mitotic phosphorylation.</title>
        <authorList>
            <person name="Dephoure N."/>
            <person name="Zhou C."/>
            <person name="Villen J."/>
            <person name="Beausoleil S.A."/>
            <person name="Bakalarski C.E."/>
            <person name="Elledge S.J."/>
            <person name="Gygi S.P."/>
        </authorList>
    </citation>
    <scope>PHOSPHORYLATION [LARGE SCALE ANALYSIS] AT SER-678 AND SER-680</scope>
    <scope>IDENTIFICATION BY MASS SPECTROMETRY [LARGE SCALE ANALYSIS]</scope>
    <source>
        <tissue>Cervix carcinoma</tissue>
    </source>
</reference>
<reference key="14">
    <citation type="journal article" date="2009" name="Anal. Chem.">
        <title>Lys-N and trypsin cover complementary parts of the phosphoproteome in a refined SCX-based approach.</title>
        <authorList>
            <person name="Gauci S."/>
            <person name="Helbig A.O."/>
            <person name="Slijper M."/>
            <person name="Krijgsveld J."/>
            <person name="Heck A.J."/>
            <person name="Mohammed S."/>
        </authorList>
    </citation>
    <scope>IDENTIFICATION BY MASS SPECTROMETRY [LARGE SCALE ANALYSIS]</scope>
</reference>
<reference key="15">
    <citation type="journal article" date="2009" name="Biochem. Biophys. Res. Commun.">
        <title>Rap2 function requires palmitoylation and recycling endosome localization.</title>
        <authorList>
            <person name="Uechi Y."/>
            <person name="Bayarjargal M."/>
            <person name="Umikawa M."/>
            <person name="Oshiro M."/>
            <person name="Takei K."/>
            <person name="Yamashiro Y."/>
            <person name="Asato T."/>
            <person name="Endo S."/>
            <person name="Misaki R."/>
            <person name="Taguchi T."/>
            <person name="Kariya K."/>
        </authorList>
    </citation>
    <scope>FUNCTION</scope>
    <scope>SUBCELLULAR LOCATION</scope>
</reference>
<reference key="16">
    <citation type="journal article" date="2009" name="EMBO J.">
        <title>The kinase TNIK is an essential activator of Wnt target genes.</title>
        <authorList>
            <person name="Mahmoudi T."/>
            <person name="Li V.S.W."/>
            <person name="Ng S.S."/>
            <person name="Taouatas N."/>
            <person name="Vries R.G.J."/>
            <person name="Mohammed S."/>
            <person name="Heck A.J."/>
            <person name="Clevers H."/>
        </authorList>
    </citation>
    <scope>SUBCELLULAR LOCATION</scope>
    <scope>AUTOPHOSPHORYLATION</scope>
    <scope>MUTAGENESIS OF LYS-54; 152-ARG-ASP-153 AND 171-ASP-PHE-172</scope>
    <scope>INTERACTION WITH TCF7L2 AND CTNNB1</scope>
    <scope>TISSUE SPECIFICITY</scope>
    <scope>FUNCTION</scope>
</reference>
<reference key="17">
    <citation type="journal article" date="2009" name="Mol. Cell. Proteomics">
        <title>Large-scale proteomics analysis of the human kinome.</title>
        <authorList>
            <person name="Oppermann F.S."/>
            <person name="Gnad F."/>
            <person name="Olsen J.V."/>
            <person name="Hornberger R."/>
            <person name="Greff Z."/>
            <person name="Keri G."/>
            <person name="Mann M."/>
            <person name="Daub H."/>
        </authorList>
    </citation>
    <scope>PHOSPHORYLATION [LARGE SCALE ANALYSIS] AT SER-560; SER-640; SER-688; SER-707; SER-720; SER-766 AND SER-769</scope>
    <scope>IDENTIFICATION BY MASS SPECTROMETRY [LARGE SCALE ANALYSIS]</scope>
</reference>
<reference key="18">
    <citation type="journal article" date="2010" name="Neuron">
        <title>Regulation of Rap2A by the ubiquitin ligase Nedd4-1 controls neurite development.</title>
        <authorList>
            <person name="Kawabe H."/>
            <person name="Neeb A."/>
            <person name="Dimova K."/>
            <person name="Young S.M. Jr."/>
            <person name="Takeda M."/>
            <person name="Katsurabayashi S."/>
            <person name="Mitkovski M."/>
            <person name="Malakhova O.A."/>
            <person name="Zhang D.E."/>
            <person name="Umikawa M."/>
            <person name="Kariya K."/>
            <person name="Goebbels S."/>
            <person name="Nave K.A."/>
            <person name="Rosenmund C."/>
            <person name="Jahn O."/>
            <person name="Rhee J."/>
            <person name="Brose N."/>
        </authorList>
    </citation>
    <scope>FUNCTION</scope>
    <scope>INTERACTION WITH NEDD4 AND RAP2A</scope>
</reference>
<reference key="19">
    <citation type="journal article" date="2011" name="BMC Syst. Biol.">
        <title>Initial characterization of the human central proteome.</title>
        <authorList>
            <person name="Burkard T.R."/>
            <person name="Planyavsky M."/>
            <person name="Kaupe I."/>
            <person name="Breitwieser F.P."/>
            <person name="Buerckstuemmer T."/>
            <person name="Bennett K.L."/>
            <person name="Superti-Furga G."/>
            <person name="Colinge J."/>
        </authorList>
    </citation>
    <scope>IDENTIFICATION BY MASS SPECTROMETRY [LARGE SCALE ANALYSIS]</scope>
</reference>
<reference key="20">
    <citation type="journal article" date="2011" name="Proc. Natl. Acad. Sci. U.S.A.">
        <title>Smad inhibition by the Ste20 kinase Misshapen.</title>
        <authorList>
            <person name="Kaneko S."/>
            <person name="Chen X."/>
            <person name="Lu P."/>
            <person name="Yao X."/>
            <person name="Wright T.G."/>
            <person name="Rajurkar M."/>
            <person name="Kariya K."/>
            <person name="Mao J."/>
            <person name="Ip Y.T."/>
            <person name="Xu L."/>
        </authorList>
    </citation>
    <scope>FUNCTION</scope>
</reference>
<reference key="21">
    <citation type="journal article" date="2011" name="Sci. Signal.">
        <title>System-wide temporal characterization of the proteome and phosphoproteome of human embryonic stem cell differentiation.</title>
        <authorList>
            <person name="Rigbolt K.T."/>
            <person name="Prokhorova T.A."/>
            <person name="Akimov V."/>
            <person name="Henningsen J."/>
            <person name="Johansen P.T."/>
            <person name="Kratchmarova I."/>
            <person name="Kassem M."/>
            <person name="Mann M."/>
            <person name="Olsen J.V."/>
            <person name="Blagoev B."/>
        </authorList>
    </citation>
    <scope>PHOSPHORYLATION [LARGE SCALE ANALYSIS] AT SER-326; SER-688 AND SER-769</scope>
    <scope>IDENTIFICATION BY MASS SPECTROMETRY [LARGE SCALE ANALYSIS]</scope>
</reference>
<reference key="22">
    <citation type="journal article" date="2013" name="J. Proteome Res.">
        <title>Toward a comprehensive characterization of a human cancer cell phosphoproteome.</title>
        <authorList>
            <person name="Zhou H."/>
            <person name="Di Palma S."/>
            <person name="Preisinger C."/>
            <person name="Peng M."/>
            <person name="Polat A.N."/>
            <person name="Heck A.J."/>
            <person name="Mohammed S."/>
        </authorList>
    </citation>
    <scope>PHOSPHORYLATION [LARGE SCALE ANALYSIS] AT SER-570; SER-600; SER-608; SER-610; SER-640; SER-678; SER-680; SER-688; SER-701; SER-707; SER-720; SER-764; SER-769 AND SER-959</scope>
    <scope>IDENTIFICATION BY MASS SPECTROMETRY [LARGE SCALE ANALYSIS]</scope>
    <source>
        <tissue>Erythroleukemia</tissue>
    </source>
</reference>
<reference key="23">
    <citation type="journal article" date="2014" name="J. Proteomics">
        <title>An enzyme assisted RP-RPLC approach for in-depth analysis of human liver phosphoproteome.</title>
        <authorList>
            <person name="Bian Y."/>
            <person name="Song C."/>
            <person name="Cheng K."/>
            <person name="Dong M."/>
            <person name="Wang F."/>
            <person name="Huang J."/>
            <person name="Sun D."/>
            <person name="Wang L."/>
            <person name="Ye M."/>
            <person name="Zou H."/>
        </authorList>
    </citation>
    <scope>PHOSPHORYLATION [LARGE SCALE ANALYSIS] AT SER-640 AND SER-680</scope>
    <scope>IDENTIFICATION BY MASS SPECTROMETRY [LARGE SCALE ANALYSIS]</scope>
    <source>
        <tissue>Liver</tissue>
    </source>
</reference>
<reference key="24">
    <citation type="journal article" date="2015" name="Nat. Commun.">
        <title>MAP4K family kinases act in parallel to MST1/2 to activate LATS1/2 in the Hippo pathway.</title>
        <authorList>
            <person name="Meng Z."/>
            <person name="Moroishi T."/>
            <person name="Mottier-Pavie V."/>
            <person name="Plouffe S.W."/>
            <person name="Hansen C.G."/>
            <person name="Hong A.W."/>
            <person name="Park H.W."/>
            <person name="Mo J.S."/>
            <person name="Lu W."/>
            <person name="Lu S."/>
            <person name="Flores F."/>
            <person name="Yu F.X."/>
            <person name="Halder G."/>
            <person name="Guan K.L."/>
        </authorList>
    </citation>
    <scope>FUNCTION</scope>
</reference>
<reference key="25">
    <citation type="journal article" date="2016" name="Hum. Genet.">
        <title>A null mutation in TNIK defines a novel locus for intellectual disability.</title>
        <authorList>
            <person name="Anazi S."/>
            <person name="Shamseldin H.E."/>
            <person name="AlNaqeb D."/>
            <person name="Abouelhoda M."/>
            <person name="Monies D."/>
            <person name="Salih M.A."/>
            <person name="Al-Rubeaan K."/>
            <person name="Alkuraya F.S."/>
        </authorList>
    </citation>
    <scope>POSSIBLE INVOLVEMENT IN MRT54</scope>
</reference>
<reference key="26">
    <citation type="journal article" date="2007" name="Nature">
        <title>Patterns of somatic mutation in human cancer genomes.</title>
        <authorList>
            <person name="Greenman C."/>
            <person name="Stephens P."/>
            <person name="Smith R."/>
            <person name="Dalgliesh G.L."/>
            <person name="Hunter C."/>
            <person name="Bignell G."/>
            <person name="Davies H."/>
            <person name="Teague J."/>
            <person name="Butler A."/>
            <person name="Stevens C."/>
            <person name="Edkins S."/>
            <person name="O'Meara S."/>
            <person name="Vastrik I."/>
            <person name="Schmidt E.E."/>
            <person name="Avis T."/>
            <person name="Barthorpe S."/>
            <person name="Bhamra G."/>
            <person name="Buck G."/>
            <person name="Choudhury B."/>
            <person name="Clements J."/>
            <person name="Cole J."/>
            <person name="Dicks E."/>
            <person name="Forbes S."/>
            <person name="Gray K."/>
            <person name="Halliday K."/>
            <person name="Harrison R."/>
            <person name="Hills K."/>
            <person name="Hinton J."/>
            <person name="Jenkinson A."/>
            <person name="Jones D."/>
            <person name="Menzies A."/>
            <person name="Mironenko T."/>
            <person name="Perry J."/>
            <person name="Raine K."/>
            <person name="Richardson D."/>
            <person name="Shepherd R."/>
            <person name="Small A."/>
            <person name="Tofts C."/>
            <person name="Varian J."/>
            <person name="Webb T."/>
            <person name="West S."/>
            <person name="Widaa S."/>
            <person name="Yates A."/>
            <person name="Cahill D.P."/>
            <person name="Louis D.N."/>
            <person name="Goldstraw P."/>
            <person name="Nicholson A.G."/>
            <person name="Brasseur F."/>
            <person name="Looijenga L."/>
            <person name="Weber B.L."/>
            <person name="Chiew Y.-E."/>
            <person name="DeFazio A."/>
            <person name="Greaves M.F."/>
            <person name="Green A.R."/>
            <person name="Campbell P."/>
            <person name="Birney E."/>
            <person name="Easton D.F."/>
            <person name="Chenevix-Trench G."/>
            <person name="Tan M.-H."/>
            <person name="Khoo S.K."/>
            <person name="Teh B.T."/>
            <person name="Yuen S.T."/>
            <person name="Leung S.Y."/>
            <person name="Wooster R."/>
            <person name="Futreal P.A."/>
            <person name="Stratton M.R."/>
        </authorList>
    </citation>
    <scope>VARIANTS [LARGE SCALE ANALYSIS] GLU-778; GLU-910 AND THR-999</scope>
</reference>